<feature type="chain" id="PRO_0000191054" description="Solute carrier organic anion transporter family member 1C1">
    <location>
        <begin position="1"/>
        <end position="712"/>
    </location>
</feature>
<feature type="topological domain" description="Cytoplasmic" evidence="1">
    <location>
        <begin position="1"/>
        <end position="43"/>
    </location>
</feature>
<feature type="transmembrane region" description="Helical; Name=1" evidence="1">
    <location>
        <begin position="44"/>
        <end position="63"/>
    </location>
</feature>
<feature type="topological domain" description="Extracellular" evidence="1">
    <location>
        <begin position="64"/>
        <end position="82"/>
    </location>
</feature>
<feature type="transmembrane region" description="Helical; Name=2" evidence="1">
    <location>
        <begin position="83"/>
        <end position="103"/>
    </location>
</feature>
<feature type="topological domain" description="Cytoplasmic" evidence="1">
    <location>
        <begin position="104"/>
        <end position="109"/>
    </location>
</feature>
<feature type="transmembrane region" description="Helical; Name=3" evidence="1">
    <location>
        <begin position="110"/>
        <end position="134"/>
    </location>
</feature>
<feature type="topological domain" description="Extracellular" evidence="1">
    <location>
        <begin position="135"/>
        <end position="184"/>
    </location>
</feature>
<feature type="transmembrane region" description="Helical; Name=4" evidence="1">
    <location>
        <begin position="185"/>
        <end position="213"/>
    </location>
</feature>
<feature type="topological domain" description="Cytoplasmic" evidence="1">
    <location>
        <begin position="214"/>
        <end position="232"/>
    </location>
</feature>
<feature type="transmembrane region" description="Helical; Name=5" evidence="1">
    <location>
        <begin position="233"/>
        <end position="253"/>
    </location>
</feature>
<feature type="topological domain" description="Extracellular" evidence="1">
    <location>
        <begin position="254"/>
        <end position="271"/>
    </location>
</feature>
<feature type="transmembrane region" description="Helical; Name=6" evidence="1">
    <location>
        <begin position="272"/>
        <end position="296"/>
    </location>
</feature>
<feature type="topological domain" description="Cytoplasmic" evidence="1">
    <location>
        <begin position="297"/>
        <end position="348"/>
    </location>
</feature>
<feature type="transmembrane region" description="Helical; Name=7" evidence="1">
    <location>
        <begin position="349"/>
        <end position="370"/>
    </location>
</feature>
<feature type="topological domain" description="Extracellular" evidence="1">
    <location>
        <begin position="371"/>
        <end position="390"/>
    </location>
</feature>
<feature type="transmembrane region" description="Helical; Name=8" evidence="1">
    <location>
        <begin position="391"/>
        <end position="414"/>
    </location>
</feature>
<feature type="topological domain" description="Cytoplasmic" evidence="1">
    <location>
        <begin position="415"/>
        <end position="418"/>
    </location>
</feature>
<feature type="transmembrane region" description="Helical; Name=9" evidence="1">
    <location>
        <begin position="419"/>
        <end position="442"/>
    </location>
</feature>
<feature type="topological domain" description="Extracellular" evidence="1">
    <location>
        <begin position="443"/>
        <end position="554"/>
    </location>
</feature>
<feature type="transmembrane region" description="Helical; Name=10" evidence="1">
    <location>
        <begin position="555"/>
        <end position="577"/>
    </location>
</feature>
<feature type="topological domain" description="Cytoplasmic" evidence="1">
    <location>
        <begin position="578"/>
        <end position="586"/>
    </location>
</feature>
<feature type="transmembrane region" description="Helical; Name=11" evidence="1">
    <location>
        <begin position="587"/>
        <end position="612"/>
    </location>
</feature>
<feature type="topological domain" description="Extracellular" evidence="1">
    <location>
        <begin position="613"/>
        <end position="646"/>
    </location>
</feature>
<feature type="transmembrane region" description="Helical; Name=12" evidence="1">
    <location>
        <begin position="647"/>
        <end position="664"/>
    </location>
</feature>
<feature type="topological domain" description="Cytoplasmic" evidence="1">
    <location>
        <begin position="665"/>
        <end position="712"/>
    </location>
</feature>
<feature type="domain" description="Kazal-like" evidence="2">
    <location>
        <begin position="470"/>
        <end position="525"/>
    </location>
</feature>
<feature type="glycosylation site" description="N-linked (GlcNAc...) asparagine" evidence="1">
    <location>
        <position position="146"/>
    </location>
</feature>
<feature type="glycosylation site" description="N-linked (GlcNAc...) asparagine" evidence="1">
    <location>
        <position position="510"/>
    </location>
</feature>
<feature type="glycosylation site" description="N-linked (GlcNAc...) asparagine" evidence="1">
    <location>
        <position position="520"/>
    </location>
</feature>
<feature type="glycosylation site" description="N-linked (GlcNAc...) asparagine" evidence="1">
    <location>
        <position position="533"/>
    </location>
</feature>
<feature type="disulfide bond" evidence="2">
    <location>
        <begin position="476"/>
        <end position="506"/>
    </location>
</feature>
<feature type="disulfide bond" evidence="2">
    <location>
        <begin position="482"/>
        <end position="502"/>
    </location>
</feature>
<feature type="disulfide bond" evidence="2">
    <location>
        <begin position="491"/>
        <end position="523"/>
    </location>
</feature>
<feature type="splice variant" id="VSP_045278" description="In isoform 4." evidence="10">
    <location>
        <begin position="1"/>
        <end position="118"/>
    </location>
</feature>
<feature type="splice variant" id="VSP_042882" description="In isoform 2." evidence="10">
    <location>
        <begin position="177"/>
        <end position="225"/>
    </location>
</feature>
<feature type="splice variant" id="VSP_045279" description="In isoform 3 and isoform 4." evidence="10 11">
    <original>HIYLGLTVILGTVSILLSIAVLFILKKNYVSKHRSFITKRERTMVSTRFQKENYTTSDHLLQPNYWPGKETQL</original>
    <variation>YQIKSIPASHCYSIPDLHNATDTNKFSCHFTACKTYISGTNCDTGHSVNSPKHCSTFHFKEKLCFKTQKFYNQERKNNGVYKIPKGKLHYK</variation>
    <location>
        <begin position="640"/>
        <end position="712"/>
    </location>
</feature>
<feature type="mutagenesis site" description="Gain of pH-sensitivity of E1S transport." evidence="6">
    <original>Q</original>
    <variation>H</variation>
    <location>
        <position position="130"/>
    </location>
</feature>
<feature type="sequence conflict" description="In Ref. 3; BAH14027." evidence="14" ref="3">
    <original>A</original>
    <variation>T</variation>
    <location>
        <position position="444"/>
    </location>
</feature>
<feature type="sequence conflict" description="In Ref. 3; BAH14027." evidence="14" ref="3">
    <original>T</original>
    <variation>S</variation>
    <location sequence="Q9NYB5-3">
        <position position="660"/>
    </location>
</feature>
<feature type="sequence conflict" description="In Ref. 3; BAH11737." evidence="14" ref="3">
    <original>S</original>
    <variation>F</variation>
    <location sequence="Q9NYB5-4">
        <position position="559"/>
    </location>
</feature>
<gene>
    <name type="primary">SLCO1C1</name>
    <name type="synonym">OATP14</name>
    <name type="synonym">OATP1C1</name>
    <name type="synonym">OATPF</name>
    <name type="synonym">SLC21A14</name>
</gene>
<comment type="function">
    <text evidence="3 4 6 7">Mediates the Na(+)-independent high affinity transport of organic anions such as the thyroid hormones L-thyroxine (T4), L-thyroxine sulfate (T4S), and 3,3',5'-triiodo-L-thyronine (reverse T3, rT3) at the plasma membrane (PubMed:12351693, PubMed:18566113, PubMed:19129463). Regulates T4 levels in different brain regions by transporting T4, and also by serving as an export pump for T4S, which is a source of T4 after hydrolysis by local sulfatases (PubMed:18566113). Increases the access of these substrates to the intracellular sites where they are metabolized by the deiodinases (PubMed:18566113). Other potential substrates, such as triiodothyronine (T3), 17-beta-glucuronosyl estradiol (17beta-estradiol 17-O-(beta-D-glucuronate)), estrone-3-sulfate (E1S) and sulfobromophthalein (BSP) are transported with much lower efficiency (PubMed:12351693, PubMed:19129463). Transports T4 and E1S in a pH-insensitive manner (PubMed:19129463). Facilitates the transport of thyroid hormones across the blood-brain barrier and into glia and neuronal cells in the brain (PubMed:30296914).</text>
</comment>
<comment type="catalytic activity">
    <reaction evidence="3">
        <text>3,3',5'-triiodo-L-thyronine(out) = 3,3',5'-triiodo-L-thyronine(in)</text>
        <dbReference type="Rhea" id="RHEA:71815"/>
        <dbReference type="ChEBI" id="CHEBI:57261"/>
    </reaction>
</comment>
<comment type="catalytic activity">
    <reaction evidence="3 4 15 16">
        <text>L-thyroxine(out) = L-thyroxine(in)</text>
        <dbReference type="Rhea" id="RHEA:71819"/>
        <dbReference type="ChEBI" id="CHEBI:58448"/>
    </reaction>
</comment>
<comment type="catalytic activity">
    <reaction evidence="4">
        <text>L-thyroxine sulfate(out) = L-thyroxine sulfate(in)</text>
        <dbReference type="Rhea" id="RHEA:73311"/>
        <dbReference type="ChEBI" id="CHEBI:176512"/>
    </reaction>
</comment>
<comment type="biophysicochemical properties">
    <kinetics>
        <KM evidence="3">90 nM for L-thyroxine</KM>
        <KM evidence="4">120 nM for L-thyroxine</KM>
        <KM evidence="6">270 nM for L-thyroxine (at pH 6.5)</KM>
        <KM evidence="6">180 nM for L-thyroxine (at pH 8.0)</KM>
        <KM evidence="3">128 nM for 3,3',5'-triiodo-L-thyronine</KM>
        <KM evidence="4">2.6 uM for L-thyroxine sulfate</KM>
        <Vmax evidence="6">37.8 pmol/min/mg enzyme with L-thyroxine as substrate (at pH 6.5)</Vmax>
        <Vmax evidence="6">22.0 pmol/min/mg enzyme with L-thyroxine as substrate (at pH 8.0)</Vmax>
    </kinetics>
</comment>
<comment type="subcellular location">
    <subcellularLocation>
        <location evidence="3 5">Cell membrane</location>
        <topology evidence="5">Multi-pass membrane protein</topology>
    </subcellularLocation>
    <text evidence="5">Expressed in both luminal and abluminal membranes of brain capillary endothelial cells. Localized to the apical membrane and basal surfaces of choroid plexus.</text>
</comment>
<comment type="alternative products">
    <event type="alternative splicing"/>
    <isoform>
        <id>Q9NYB5-1</id>
        <name>1</name>
        <sequence type="displayed"/>
    </isoform>
    <isoform>
        <id>Q9NYB5-2</id>
        <name>2</name>
        <sequence type="described" ref="VSP_042882"/>
    </isoform>
    <isoform>
        <id>Q9NYB5-3</id>
        <name>3</name>
        <sequence type="described" ref="VSP_045279"/>
    </isoform>
    <isoform>
        <id>Q9NYB5-4</id>
        <name>4</name>
        <sequence type="described" ref="VSP_045278 VSP_045279"/>
    </isoform>
</comment>
<comment type="tissue specificity">
    <text evidence="3 5 8">Highly expressed in brain and in Leydig cells in testis (PubMed:12351693, PubMed:35307651). Localized in nests of Leydig cells (at protein level) (PubMed:12351693). Expressed in choroid plexus (at protein level) (PubMed:18687783). Not strongly enriched in cerebral microvessels (PubMed:18687783).</text>
</comment>
<comment type="similarity">
    <text evidence="14">Belongs to the organo anion transporter (TC 2.A.60) family.</text>
</comment>
<reference key="1">
    <citation type="journal article" date="2002" name="Mol. Endocrinol.">
        <title>Identification of a novel human organic anion transporting polypeptide as a high affinity thyroxine transporter.</title>
        <authorList>
            <person name="Pizzagalli F."/>
            <person name="Hagenbuch B."/>
            <person name="Stieger B."/>
            <person name="Klenk U."/>
            <person name="Folkers G."/>
            <person name="Meier P.J."/>
        </authorList>
    </citation>
    <scope>NUCLEOTIDE SEQUENCE [MRNA] (ISOFORM 1)</scope>
    <scope>FUNCTION</scope>
    <scope>TISSUE SPECIFICITY</scope>
    <scope>SUBCELLULAR LOCATION</scope>
    <scope>BIOPHYSICOCHEMICAL PROPERTIES</scope>
    <scope>TRANSPORTER ACTIVITY</scope>
    <source>
        <tissue>Brain</tissue>
    </source>
</reference>
<reference key="2">
    <citation type="submission" date="1999-11" db="EMBL/GenBank/DDBJ databases">
        <title>Identification and characterization of novel human OATP family members.</title>
        <authorList>
            <person name="Wu Y."/>
            <person name="Hsiang B.H."/>
            <person name="Zhu Y."/>
            <person name="Yang W.-P."/>
            <person name="Kirchgessner T.G."/>
        </authorList>
    </citation>
    <scope>NUCLEOTIDE SEQUENCE [MRNA] (ISOFORM 1)</scope>
</reference>
<reference key="3">
    <citation type="journal article" date="2004" name="Nat. Genet.">
        <title>Complete sequencing and characterization of 21,243 full-length human cDNAs.</title>
        <authorList>
            <person name="Ota T."/>
            <person name="Suzuki Y."/>
            <person name="Nishikawa T."/>
            <person name="Otsuki T."/>
            <person name="Sugiyama T."/>
            <person name="Irie R."/>
            <person name="Wakamatsu A."/>
            <person name="Hayashi K."/>
            <person name="Sato H."/>
            <person name="Nagai K."/>
            <person name="Kimura K."/>
            <person name="Makita H."/>
            <person name="Sekine M."/>
            <person name="Obayashi M."/>
            <person name="Nishi T."/>
            <person name="Shibahara T."/>
            <person name="Tanaka T."/>
            <person name="Ishii S."/>
            <person name="Yamamoto J."/>
            <person name="Saito K."/>
            <person name="Kawai Y."/>
            <person name="Isono Y."/>
            <person name="Nakamura Y."/>
            <person name="Nagahari K."/>
            <person name="Murakami K."/>
            <person name="Yasuda T."/>
            <person name="Iwayanagi T."/>
            <person name="Wagatsuma M."/>
            <person name="Shiratori A."/>
            <person name="Sudo H."/>
            <person name="Hosoiri T."/>
            <person name="Kaku Y."/>
            <person name="Kodaira H."/>
            <person name="Kondo H."/>
            <person name="Sugawara M."/>
            <person name="Takahashi M."/>
            <person name="Kanda K."/>
            <person name="Yokoi T."/>
            <person name="Furuya T."/>
            <person name="Kikkawa E."/>
            <person name="Omura Y."/>
            <person name="Abe K."/>
            <person name="Kamihara K."/>
            <person name="Katsuta N."/>
            <person name="Sato K."/>
            <person name="Tanikawa M."/>
            <person name="Yamazaki M."/>
            <person name="Ninomiya K."/>
            <person name="Ishibashi T."/>
            <person name="Yamashita H."/>
            <person name="Murakawa K."/>
            <person name="Fujimori K."/>
            <person name="Tanai H."/>
            <person name="Kimata M."/>
            <person name="Watanabe M."/>
            <person name="Hiraoka S."/>
            <person name="Chiba Y."/>
            <person name="Ishida S."/>
            <person name="Ono Y."/>
            <person name="Takiguchi S."/>
            <person name="Watanabe S."/>
            <person name="Yosida M."/>
            <person name="Hotuta T."/>
            <person name="Kusano J."/>
            <person name="Kanehori K."/>
            <person name="Takahashi-Fujii A."/>
            <person name="Hara H."/>
            <person name="Tanase T.-O."/>
            <person name="Nomura Y."/>
            <person name="Togiya S."/>
            <person name="Komai F."/>
            <person name="Hara R."/>
            <person name="Takeuchi K."/>
            <person name="Arita M."/>
            <person name="Imose N."/>
            <person name="Musashino K."/>
            <person name="Yuuki H."/>
            <person name="Oshima A."/>
            <person name="Sasaki N."/>
            <person name="Aotsuka S."/>
            <person name="Yoshikawa Y."/>
            <person name="Matsunawa H."/>
            <person name="Ichihara T."/>
            <person name="Shiohata N."/>
            <person name="Sano S."/>
            <person name="Moriya S."/>
            <person name="Momiyama H."/>
            <person name="Satoh N."/>
            <person name="Takami S."/>
            <person name="Terashima Y."/>
            <person name="Suzuki O."/>
            <person name="Nakagawa S."/>
            <person name="Senoh A."/>
            <person name="Mizoguchi H."/>
            <person name="Goto Y."/>
            <person name="Shimizu F."/>
            <person name="Wakebe H."/>
            <person name="Hishigaki H."/>
            <person name="Watanabe T."/>
            <person name="Sugiyama A."/>
            <person name="Takemoto M."/>
            <person name="Kawakami B."/>
            <person name="Yamazaki M."/>
            <person name="Watanabe K."/>
            <person name="Kumagai A."/>
            <person name="Itakura S."/>
            <person name="Fukuzumi Y."/>
            <person name="Fujimori Y."/>
            <person name="Komiyama M."/>
            <person name="Tashiro H."/>
            <person name="Tanigami A."/>
            <person name="Fujiwara T."/>
            <person name="Ono T."/>
            <person name="Yamada K."/>
            <person name="Fujii Y."/>
            <person name="Ozaki K."/>
            <person name="Hirao M."/>
            <person name="Ohmori Y."/>
            <person name="Kawabata A."/>
            <person name="Hikiji T."/>
            <person name="Kobatake N."/>
            <person name="Inagaki H."/>
            <person name="Ikema Y."/>
            <person name="Okamoto S."/>
            <person name="Okitani R."/>
            <person name="Kawakami T."/>
            <person name="Noguchi S."/>
            <person name="Itoh T."/>
            <person name="Shigeta K."/>
            <person name="Senba T."/>
            <person name="Matsumura K."/>
            <person name="Nakajima Y."/>
            <person name="Mizuno T."/>
            <person name="Morinaga M."/>
            <person name="Sasaki M."/>
            <person name="Togashi T."/>
            <person name="Oyama M."/>
            <person name="Hata H."/>
            <person name="Watanabe M."/>
            <person name="Komatsu T."/>
            <person name="Mizushima-Sugano J."/>
            <person name="Satoh T."/>
            <person name="Shirai Y."/>
            <person name="Takahashi Y."/>
            <person name="Nakagawa K."/>
            <person name="Okumura K."/>
            <person name="Nagase T."/>
            <person name="Nomura N."/>
            <person name="Kikuchi H."/>
            <person name="Masuho Y."/>
            <person name="Yamashita R."/>
            <person name="Nakai K."/>
            <person name="Yada T."/>
            <person name="Nakamura Y."/>
            <person name="Ohara O."/>
            <person name="Isogai T."/>
            <person name="Sugano S."/>
        </authorList>
    </citation>
    <scope>NUCLEOTIDE SEQUENCE [LARGE SCALE MRNA] (ISOFORMS 2; 3 AND 4)</scope>
    <source>
        <tissue>Amygdala</tissue>
        <tissue>Kidney</tissue>
        <tissue>Thalamus</tissue>
    </source>
</reference>
<reference key="4">
    <citation type="journal article" date="2007" name="BMC Genomics">
        <title>The full-ORF clone resource of the German cDNA consortium.</title>
        <authorList>
            <person name="Bechtel S."/>
            <person name="Rosenfelder H."/>
            <person name="Duda A."/>
            <person name="Schmidt C.P."/>
            <person name="Ernst U."/>
            <person name="Wellenreuther R."/>
            <person name="Mehrle A."/>
            <person name="Schuster C."/>
            <person name="Bahr A."/>
            <person name="Bloecker H."/>
            <person name="Heubner D."/>
            <person name="Hoerlein A."/>
            <person name="Michel G."/>
            <person name="Wedler H."/>
            <person name="Koehrer K."/>
            <person name="Ottenwaelder B."/>
            <person name="Poustka A."/>
            <person name="Wiemann S."/>
            <person name="Schupp I."/>
        </authorList>
    </citation>
    <scope>NUCLEOTIDE SEQUENCE [LARGE SCALE MRNA] (ISOFORM 3)</scope>
    <source>
        <tissue>Amygdala</tissue>
    </source>
</reference>
<reference key="5">
    <citation type="journal article" date="2006" name="Nature">
        <title>The finished DNA sequence of human chromosome 12.</title>
        <authorList>
            <person name="Scherer S.E."/>
            <person name="Muzny D.M."/>
            <person name="Buhay C.J."/>
            <person name="Chen R."/>
            <person name="Cree A."/>
            <person name="Ding Y."/>
            <person name="Dugan-Rocha S."/>
            <person name="Gill R."/>
            <person name="Gunaratne P."/>
            <person name="Harris R.A."/>
            <person name="Hawes A.C."/>
            <person name="Hernandez J."/>
            <person name="Hodgson A.V."/>
            <person name="Hume J."/>
            <person name="Jackson A."/>
            <person name="Khan Z.M."/>
            <person name="Kovar-Smith C."/>
            <person name="Lewis L.R."/>
            <person name="Lozado R.J."/>
            <person name="Metzker M.L."/>
            <person name="Milosavljevic A."/>
            <person name="Miner G.R."/>
            <person name="Montgomery K.T."/>
            <person name="Morgan M.B."/>
            <person name="Nazareth L.V."/>
            <person name="Scott G."/>
            <person name="Sodergren E."/>
            <person name="Song X.-Z."/>
            <person name="Steffen D."/>
            <person name="Lovering R.C."/>
            <person name="Wheeler D.A."/>
            <person name="Worley K.C."/>
            <person name="Yuan Y."/>
            <person name="Zhang Z."/>
            <person name="Adams C.Q."/>
            <person name="Ansari-Lari M.A."/>
            <person name="Ayele M."/>
            <person name="Brown M.J."/>
            <person name="Chen G."/>
            <person name="Chen Z."/>
            <person name="Clerc-Blankenburg K.P."/>
            <person name="Davis C."/>
            <person name="Delgado O."/>
            <person name="Dinh H.H."/>
            <person name="Draper H."/>
            <person name="Gonzalez-Garay M.L."/>
            <person name="Havlak P."/>
            <person name="Jackson L.R."/>
            <person name="Jacob L.S."/>
            <person name="Kelly S.H."/>
            <person name="Li L."/>
            <person name="Li Z."/>
            <person name="Liu J."/>
            <person name="Liu W."/>
            <person name="Lu J."/>
            <person name="Maheshwari M."/>
            <person name="Nguyen B.-V."/>
            <person name="Okwuonu G.O."/>
            <person name="Pasternak S."/>
            <person name="Perez L.M."/>
            <person name="Plopper F.J.H."/>
            <person name="Santibanez J."/>
            <person name="Shen H."/>
            <person name="Tabor P.E."/>
            <person name="Verduzco D."/>
            <person name="Waldron L."/>
            <person name="Wang Q."/>
            <person name="Williams G.A."/>
            <person name="Zhang J."/>
            <person name="Zhou J."/>
            <person name="Allen C.C."/>
            <person name="Amin A.G."/>
            <person name="Anyalebechi V."/>
            <person name="Bailey M."/>
            <person name="Barbaria J.A."/>
            <person name="Bimage K.E."/>
            <person name="Bryant N.P."/>
            <person name="Burch P.E."/>
            <person name="Burkett C.E."/>
            <person name="Burrell K.L."/>
            <person name="Calderon E."/>
            <person name="Cardenas V."/>
            <person name="Carter K."/>
            <person name="Casias K."/>
            <person name="Cavazos I."/>
            <person name="Cavazos S.R."/>
            <person name="Ceasar H."/>
            <person name="Chacko J."/>
            <person name="Chan S.N."/>
            <person name="Chavez D."/>
            <person name="Christopoulos C."/>
            <person name="Chu J."/>
            <person name="Cockrell R."/>
            <person name="Cox C.D."/>
            <person name="Dang M."/>
            <person name="Dathorne S.R."/>
            <person name="David R."/>
            <person name="Davis C.M."/>
            <person name="Davy-Carroll L."/>
            <person name="Deshazo D.R."/>
            <person name="Donlin J.E."/>
            <person name="D'Souza L."/>
            <person name="Eaves K.A."/>
            <person name="Egan A."/>
            <person name="Emery-Cohen A.J."/>
            <person name="Escotto M."/>
            <person name="Flagg N."/>
            <person name="Forbes L.D."/>
            <person name="Gabisi A.M."/>
            <person name="Garza M."/>
            <person name="Hamilton C."/>
            <person name="Henderson N."/>
            <person name="Hernandez O."/>
            <person name="Hines S."/>
            <person name="Hogues M.E."/>
            <person name="Huang M."/>
            <person name="Idlebird D.G."/>
            <person name="Johnson R."/>
            <person name="Jolivet A."/>
            <person name="Jones S."/>
            <person name="Kagan R."/>
            <person name="King L.M."/>
            <person name="Leal B."/>
            <person name="Lebow H."/>
            <person name="Lee S."/>
            <person name="LeVan J.M."/>
            <person name="Lewis L.C."/>
            <person name="London P."/>
            <person name="Lorensuhewa L.M."/>
            <person name="Loulseged H."/>
            <person name="Lovett D.A."/>
            <person name="Lucier A."/>
            <person name="Lucier R.L."/>
            <person name="Ma J."/>
            <person name="Madu R.C."/>
            <person name="Mapua P."/>
            <person name="Martindale A.D."/>
            <person name="Martinez E."/>
            <person name="Massey E."/>
            <person name="Mawhiney S."/>
            <person name="Meador M.G."/>
            <person name="Mendez S."/>
            <person name="Mercado C."/>
            <person name="Mercado I.C."/>
            <person name="Merritt C.E."/>
            <person name="Miner Z.L."/>
            <person name="Minja E."/>
            <person name="Mitchell T."/>
            <person name="Mohabbat F."/>
            <person name="Mohabbat K."/>
            <person name="Montgomery B."/>
            <person name="Moore N."/>
            <person name="Morris S."/>
            <person name="Munidasa M."/>
            <person name="Ngo R.N."/>
            <person name="Nguyen N.B."/>
            <person name="Nickerson E."/>
            <person name="Nwaokelemeh O.O."/>
            <person name="Nwokenkwo S."/>
            <person name="Obregon M."/>
            <person name="Oguh M."/>
            <person name="Oragunye N."/>
            <person name="Oviedo R.J."/>
            <person name="Parish B.J."/>
            <person name="Parker D.N."/>
            <person name="Parrish J."/>
            <person name="Parks K.L."/>
            <person name="Paul H.A."/>
            <person name="Payton B.A."/>
            <person name="Perez A."/>
            <person name="Perrin W."/>
            <person name="Pickens A."/>
            <person name="Primus E.L."/>
            <person name="Pu L.-L."/>
            <person name="Puazo M."/>
            <person name="Quiles M.M."/>
            <person name="Quiroz J.B."/>
            <person name="Rabata D."/>
            <person name="Reeves K."/>
            <person name="Ruiz S.J."/>
            <person name="Shao H."/>
            <person name="Sisson I."/>
            <person name="Sonaike T."/>
            <person name="Sorelle R.P."/>
            <person name="Sutton A.E."/>
            <person name="Svatek A.F."/>
            <person name="Svetz L.A."/>
            <person name="Tamerisa K.S."/>
            <person name="Taylor T.R."/>
            <person name="Teague B."/>
            <person name="Thomas N."/>
            <person name="Thorn R.D."/>
            <person name="Trejos Z.Y."/>
            <person name="Trevino B.K."/>
            <person name="Ukegbu O.N."/>
            <person name="Urban J.B."/>
            <person name="Vasquez L.I."/>
            <person name="Vera V.A."/>
            <person name="Villasana D.M."/>
            <person name="Wang L."/>
            <person name="Ward-Moore S."/>
            <person name="Warren J.T."/>
            <person name="Wei X."/>
            <person name="White F."/>
            <person name="Williamson A.L."/>
            <person name="Wleczyk R."/>
            <person name="Wooden H.S."/>
            <person name="Wooden S.H."/>
            <person name="Yen J."/>
            <person name="Yoon L."/>
            <person name="Yoon V."/>
            <person name="Zorrilla S.E."/>
            <person name="Nelson D."/>
            <person name="Kucherlapati R."/>
            <person name="Weinstock G."/>
            <person name="Gibbs R.A."/>
        </authorList>
    </citation>
    <scope>NUCLEOTIDE SEQUENCE [LARGE SCALE GENOMIC DNA]</scope>
</reference>
<reference key="6">
    <citation type="journal article" date="2004" name="Genome Res.">
        <title>The status, quality, and expansion of the NIH full-length cDNA project: the Mammalian Gene Collection (MGC).</title>
        <authorList>
            <consortium name="The MGC Project Team"/>
        </authorList>
    </citation>
    <scope>NUCLEOTIDE SEQUENCE [LARGE SCALE MRNA] (ISOFORM 1)</scope>
    <source>
        <tissue>Brain</tissue>
    </source>
</reference>
<reference key="7">
    <citation type="journal article" date="2008" name="Endocrinology">
        <title>Thyroid hormone transport and metabolism by organic anion transporter 1C1 and consequences of genetic variation.</title>
        <authorList>
            <person name="van der Deure W.M."/>
            <person name="Hansen P.S."/>
            <person name="Peeters R.P."/>
            <person name="Kyvik K.O."/>
            <person name="Friesema E.C."/>
            <person name="Hegedues L."/>
            <person name="Visser T.J."/>
        </authorList>
    </citation>
    <scope>FUNCTION</scope>
    <scope>TRANSPORTER ACTIVITY</scope>
    <scope>BIOPHYSICOCHEMICAL PROPERTIES</scope>
</reference>
<reference key="8">
    <citation type="journal article" date="2008" name="Endocrinology">
        <title>Expression of the thyroid hormone transporters monocarboxylate transporter-8 (SLC16A2) and organic ion transporter-14 (SLCO1C1) at the blood-brain barrier.</title>
        <authorList>
            <person name="Roberts L.M."/>
            <person name="Woodford K."/>
            <person name="Zhou M."/>
            <person name="Black D.S."/>
            <person name="Haggerty J.E."/>
            <person name="Tate E.H."/>
            <person name="Grindstaff K.K."/>
            <person name="Mengesha W."/>
            <person name="Raman C."/>
            <person name="Zerangue N."/>
        </authorList>
    </citation>
    <scope>TISSUE SPECIFICITY</scope>
    <scope>SUBCELLULAR LOCATION</scope>
</reference>
<reference key="9">
    <citation type="journal article" date="2009" name="Am. J. Physiol.">
        <title>Mechanisms of pH-gradient driven transport mediated by organic anion polypeptide transporters.</title>
        <authorList>
            <person name="Leuthold S."/>
            <person name="Hagenbuch B."/>
            <person name="Mohebbi N."/>
            <person name="Wagner C.A."/>
            <person name="Meier P.J."/>
            <person name="Stieger B."/>
        </authorList>
    </citation>
    <scope>FUNCTION</scope>
    <scope>TRANSPORTER ACTIVITY</scope>
    <scope>BIOPHYSICOCHEMICAL PROPERTIES</scope>
    <scope>MUTAGENESIS OF GLN-130</scope>
</reference>
<reference key="10">
    <citation type="journal article" date="2018" name="Thyroid">
        <title>Mutated Thyroid Hormone Transporter OATP1C1 Associates with Severe Brain Hypometabolism and Juvenile Neurodegeneration.</title>
        <authorList>
            <person name="Stroemme P."/>
            <person name="Groeneweg S."/>
            <person name="Lima de Souza E.C."/>
            <person name="Zevenbergen C."/>
            <person name="Torgersbraaten A."/>
            <person name="Holmgren A."/>
            <person name="Gurcan E."/>
            <person name="Meima M.E."/>
            <person name="Peeters R.P."/>
            <person name="Visser W.E."/>
            <person name="Hoeneren Johansson L."/>
            <person name="Babovic A."/>
            <person name="Zetterberg H."/>
            <person name="Heuer H."/>
            <person name="Frengen E."/>
            <person name="Misceo D."/>
            <person name="Visser T.J."/>
        </authorList>
    </citation>
    <scope>FUNCTION</scope>
    <scope>TRANSPORTER ACTIVITY</scope>
</reference>
<reference key="11">
    <citation type="journal article" date="2022" name="Drug Metab. Dispos.">
        <title>Localization of Xenobiotic Transporters Expressed at the Human Blood-Testis Barrier.</title>
        <authorList>
            <person name="Hau R.K."/>
            <person name="Klein R.R."/>
            <person name="Wright S.H."/>
            <person name="Cherrington N.J."/>
        </authorList>
    </citation>
    <scope>TISSUE SPECIFICITY</scope>
</reference>
<protein>
    <recommendedName>
        <fullName>Solute carrier organic anion transporter family member 1C1</fullName>
    </recommendedName>
    <alternativeName>
        <fullName evidence="12">Organic anion transporter 1C1</fullName>
        <shortName evidence="12">OATP1C1</shortName>
    </alternativeName>
    <alternativeName>
        <fullName>Organic anion transporter F</fullName>
        <shortName evidence="9">OATP-F</shortName>
    </alternativeName>
    <alternativeName>
        <fullName>Organic anion transporter polypeptide-related protein 5</fullName>
        <shortName>OAT-RP-5</shortName>
        <shortName>OATP-RP5</shortName>
    </alternativeName>
    <alternativeName>
        <fullName evidence="13">Organic anion-transporting polypeptide 14</fullName>
        <shortName evidence="13">OATP-14</shortName>
    </alternativeName>
    <alternativeName>
        <fullName>Solute carrier family 21 member 14</fullName>
    </alternativeName>
    <alternativeName>
        <fullName>Thyroxine transporter</fullName>
    </alternativeName>
</protein>
<evidence type="ECO:0000255" key="1"/>
<evidence type="ECO:0000255" key="2">
    <source>
        <dbReference type="PROSITE-ProRule" id="PRU00798"/>
    </source>
</evidence>
<evidence type="ECO:0000269" key="3">
    <source>
    </source>
</evidence>
<evidence type="ECO:0000269" key="4">
    <source>
    </source>
</evidence>
<evidence type="ECO:0000269" key="5">
    <source>
    </source>
</evidence>
<evidence type="ECO:0000269" key="6">
    <source>
    </source>
</evidence>
<evidence type="ECO:0000269" key="7">
    <source>
    </source>
</evidence>
<evidence type="ECO:0000269" key="8">
    <source>
    </source>
</evidence>
<evidence type="ECO:0000303" key="9">
    <source>
    </source>
</evidence>
<evidence type="ECO:0000303" key="10">
    <source>
    </source>
</evidence>
<evidence type="ECO:0000303" key="11">
    <source>
    </source>
</evidence>
<evidence type="ECO:0000303" key="12">
    <source>
    </source>
</evidence>
<evidence type="ECO:0000303" key="13">
    <source>
    </source>
</evidence>
<evidence type="ECO:0000305" key="14"/>
<evidence type="ECO:0000305" key="15">
    <source>
    </source>
</evidence>
<evidence type="ECO:0000305" key="16">
    <source>
    </source>
</evidence>
<dbReference type="EMBL" id="AF260704">
    <property type="protein sequence ID" value="AAF70338.1"/>
    <property type="molecule type" value="mRNA"/>
</dbReference>
<dbReference type="EMBL" id="AF205076">
    <property type="protein sequence ID" value="AAG42208.1"/>
    <property type="molecule type" value="mRNA"/>
</dbReference>
<dbReference type="EMBL" id="AK294333">
    <property type="protein sequence ID" value="BAH11737.1"/>
    <property type="molecule type" value="mRNA"/>
</dbReference>
<dbReference type="EMBL" id="AK296236">
    <property type="protein sequence ID" value="BAH12289.1"/>
    <property type="molecule type" value="mRNA"/>
</dbReference>
<dbReference type="EMBL" id="AK303713">
    <property type="protein sequence ID" value="BAH14027.1"/>
    <property type="molecule type" value="mRNA"/>
</dbReference>
<dbReference type="EMBL" id="AL834209">
    <property type="protein sequence ID" value="CAI46209.1"/>
    <property type="molecule type" value="mRNA"/>
</dbReference>
<dbReference type="EMBL" id="AC092491">
    <property type="status" value="NOT_ANNOTATED_CDS"/>
    <property type="molecule type" value="Genomic_DNA"/>
</dbReference>
<dbReference type="EMBL" id="BC022461">
    <property type="protein sequence ID" value="AAH22461.1"/>
    <property type="molecule type" value="mRNA"/>
</dbReference>
<dbReference type="CCDS" id="CCDS53757.1">
    <molecule id="Q9NYB5-3"/>
</dbReference>
<dbReference type="CCDS" id="CCDS53758.1">
    <molecule id="Q9NYB5-2"/>
</dbReference>
<dbReference type="CCDS" id="CCDS53759.1">
    <molecule id="Q9NYB5-4"/>
</dbReference>
<dbReference type="CCDS" id="CCDS8683.1">
    <molecule id="Q9NYB5-1"/>
</dbReference>
<dbReference type="RefSeq" id="NP_001139416.1">
    <molecule id="Q9NYB5-4"/>
    <property type="nucleotide sequence ID" value="NM_001145944.2"/>
</dbReference>
<dbReference type="RefSeq" id="NP_001139417.1">
    <molecule id="Q9NYB5-2"/>
    <property type="nucleotide sequence ID" value="NM_001145945.2"/>
</dbReference>
<dbReference type="RefSeq" id="NP_001139418.1">
    <molecule id="Q9NYB5-3"/>
    <property type="nucleotide sequence ID" value="NM_001145946.2"/>
</dbReference>
<dbReference type="RefSeq" id="NP_059131.1">
    <molecule id="Q9NYB5-1"/>
    <property type="nucleotide sequence ID" value="NM_017435.5"/>
</dbReference>
<dbReference type="RefSeq" id="XP_005253451.1">
    <property type="nucleotide sequence ID" value="XM_005253394.2"/>
</dbReference>
<dbReference type="RefSeq" id="XP_005253453.1">
    <property type="nucleotide sequence ID" value="XM_005253396.2"/>
</dbReference>
<dbReference type="RefSeq" id="XP_011519011.1">
    <property type="nucleotide sequence ID" value="XM_011520709.2"/>
</dbReference>
<dbReference type="RefSeq" id="XP_016874973.1">
    <property type="nucleotide sequence ID" value="XM_017019484.1"/>
</dbReference>
<dbReference type="RefSeq" id="XP_016874974.1">
    <property type="nucleotide sequence ID" value="XM_017019485.1"/>
</dbReference>
<dbReference type="SMR" id="Q9NYB5"/>
<dbReference type="BioGRID" id="119819">
    <property type="interactions" value="1"/>
</dbReference>
<dbReference type="FunCoup" id="Q9NYB5">
    <property type="interactions" value="276"/>
</dbReference>
<dbReference type="IntAct" id="Q9NYB5">
    <property type="interactions" value="2"/>
</dbReference>
<dbReference type="MINT" id="Q9NYB5"/>
<dbReference type="STRING" id="9606.ENSP00000444149"/>
<dbReference type="ChEMBL" id="CHEMBL2073697"/>
<dbReference type="DrugBank" id="DB00286">
    <property type="generic name" value="Conjugated estrogens"/>
</dbReference>
<dbReference type="DrugBank" id="DB00509">
    <property type="generic name" value="Dextrothyroxine"/>
</dbReference>
<dbReference type="DrugBank" id="DB00586">
    <property type="generic name" value="Diclofenac"/>
</dbReference>
<dbReference type="DrugBank" id="DB00917">
    <property type="generic name" value="Dinoprostone"/>
</dbReference>
<dbReference type="DrugBank" id="DB00783">
    <property type="generic name" value="Estradiol"/>
</dbReference>
<dbReference type="DrugBank" id="DB13952">
    <property type="generic name" value="Estradiol acetate"/>
</dbReference>
<dbReference type="DrugBank" id="DB13953">
    <property type="generic name" value="Estradiol benzoate"/>
</dbReference>
<dbReference type="DrugBank" id="DB13954">
    <property type="generic name" value="Estradiol cypionate"/>
</dbReference>
<dbReference type="DrugBank" id="DB13955">
    <property type="generic name" value="Estradiol dienanthate"/>
</dbReference>
<dbReference type="DrugBank" id="DB13956">
    <property type="generic name" value="Estradiol valerate"/>
</dbReference>
<dbReference type="DrugBank" id="DB00451">
    <property type="generic name" value="Levothyroxine"/>
</dbReference>
<dbReference type="DrugBank" id="DB00279">
    <property type="generic name" value="Liothyronine"/>
</dbReference>
<dbReference type="DrugBank" id="DB01583">
    <property type="generic name" value="Liotrix"/>
</dbReference>
<dbReference type="DrugBank" id="DB00939">
    <property type="generic name" value="Meclofenamic acid"/>
</dbReference>
<dbReference type="DrugBank" id="DB00563">
    <property type="generic name" value="Methotrexate"/>
</dbReference>
<dbReference type="DrugBank" id="DB01092">
    <property type="generic name" value="Ouabain"/>
</dbReference>
<dbReference type="DrugBank" id="DB00252">
    <property type="generic name" value="Phenytoin"/>
</dbReference>
<dbReference type="DrugBank" id="DB01032">
    <property type="generic name" value="Probenecid"/>
</dbReference>
<dbReference type="DrugBank" id="DB04348">
    <property type="generic name" value="Taurocholic acid"/>
</dbReference>
<dbReference type="DrugBank" id="DB09100">
    <property type="generic name" value="Thyroid, porcine"/>
</dbReference>
<dbReference type="TCDB" id="2.A.60.1.15">
    <property type="family name" value="the organo anion transporter (oat) family"/>
</dbReference>
<dbReference type="GlyCosmos" id="Q9NYB5">
    <property type="glycosylation" value="4 sites, No reported glycans"/>
</dbReference>
<dbReference type="GlyGen" id="Q9NYB5">
    <property type="glycosylation" value="5 sites, 1 O-linked glycan (1 site)"/>
</dbReference>
<dbReference type="iPTMnet" id="Q9NYB5"/>
<dbReference type="PhosphoSitePlus" id="Q9NYB5"/>
<dbReference type="BioMuta" id="SLCO1C1"/>
<dbReference type="DMDM" id="27734564"/>
<dbReference type="MassIVE" id="Q9NYB5"/>
<dbReference type="PaxDb" id="9606-ENSP00000444149"/>
<dbReference type="PeptideAtlas" id="Q9NYB5"/>
<dbReference type="ProteomicsDB" id="83207">
    <molecule id="Q9NYB5-1"/>
</dbReference>
<dbReference type="ProteomicsDB" id="83208">
    <molecule id="Q9NYB5-2"/>
</dbReference>
<dbReference type="Antibodypedia" id="23947">
    <property type="antibodies" value="106 antibodies from 20 providers"/>
</dbReference>
<dbReference type="DNASU" id="53919"/>
<dbReference type="Ensembl" id="ENST00000266509.7">
    <molecule id="Q9NYB5-1"/>
    <property type="protein sequence ID" value="ENSP00000266509.2"/>
    <property type="gene ID" value="ENSG00000139155.9"/>
</dbReference>
<dbReference type="Ensembl" id="ENST00000540354.5">
    <molecule id="Q9NYB5-2"/>
    <property type="protein sequence ID" value="ENSP00000438665.1"/>
    <property type="gene ID" value="ENSG00000139155.9"/>
</dbReference>
<dbReference type="Ensembl" id="ENST00000545102.1">
    <molecule id="Q9NYB5-4"/>
    <property type="protein sequence ID" value="ENSP00000444527.1"/>
    <property type="gene ID" value="ENSG00000139155.9"/>
</dbReference>
<dbReference type="Ensembl" id="ENST00000545604.5">
    <molecule id="Q9NYB5-3"/>
    <property type="protein sequence ID" value="ENSP00000444149.1"/>
    <property type="gene ID" value="ENSG00000139155.9"/>
</dbReference>
<dbReference type="GeneID" id="53919"/>
<dbReference type="KEGG" id="hsa:53919"/>
<dbReference type="MANE-Select" id="ENST00000266509.7">
    <property type="protein sequence ID" value="ENSP00000266509.2"/>
    <property type="RefSeq nucleotide sequence ID" value="NM_017435.5"/>
    <property type="RefSeq protein sequence ID" value="NP_059131.1"/>
</dbReference>
<dbReference type="UCSC" id="uc001rei.3">
    <molecule id="Q9NYB5-1"/>
    <property type="organism name" value="human"/>
</dbReference>
<dbReference type="AGR" id="HGNC:13819"/>
<dbReference type="CTD" id="53919"/>
<dbReference type="DisGeNET" id="53919"/>
<dbReference type="GeneCards" id="SLCO1C1"/>
<dbReference type="HGNC" id="HGNC:13819">
    <property type="gene designation" value="SLCO1C1"/>
</dbReference>
<dbReference type="HPA" id="ENSG00000139155">
    <property type="expression patterns" value="Group enriched (brain, choroid plexus, pituitary gland)"/>
</dbReference>
<dbReference type="MalaCards" id="SLCO1C1"/>
<dbReference type="MIM" id="613389">
    <property type="type" value="gene"/>
</dbReference>
<dbReference type="neXtProt" id="NX_Q9NYB5"/>
<dbReference type="OpenTargets" id="ENSG00000139155"/>
<dbReference type="PharmGKB" id="PA37815"/>
<dbReference type="VEuPathDB" id="HostDB:ENSG00000139155"/>
<dbReference type="eggNOG" id="KOG3626">
    <property type="taxonomic scope" value="Eukaryota"/>
</dbReference>
<dbReference type="GeneTree" id="ENSGT01130000278287"/>
<dbReference type="HOGENOM" id="CLU_008954_4_0_1"/>
<dbReference type="InParanoid" id="Q9NYB5"/>
<dbReference type="OMA" id="ISYDKHP"/>
<dbReference type="OrthoDB" id="5062115at2759"/>
<dbReference type="PAN-GO" id="Q9NYB5">
    <property type="GO annotations" value="5 GO annotations based on evolutionary models"/>
</dbReference>
<dbReference type="PhylomeDB" id="Q9NYB5"/>
<dbReference type="PathwayCommons" id="Q9NYB5"/>
<dbReference type="Reactome" id="R-HSA-879518">
    <property type="pathway name" value="Transport of organic anions"/>
</dbReference>
<dbReference type="SignaLink" id="Q9NYB5"/>
<dbReference type="BioGRID-ORCS" id="53919">
    <property type="hits" value="9 hits in 1137 CRISPR screens"/>
</dbReference>
<dbReference type="ChiTaRS" id="SLCO1C1">
    <property type="organism name" value="human"/>
</dbReference>
<dbReference type="GenomeRNAi" id="53919"/>
<dbReference type="Pharos" id="Q9NYB5">
    <property type="development level" value="Tbio"/>
</dbReference>
<dbReference type="PRO" id="PR:Q9NYB5"/>
<dbReference type="Proteomes" id="UP000005640">
    <property type="component" value="Chromosome 12"/>
</dbReference>
<dbReference type="RNAct" id="Q9NYB5">
    <property type="molecule type" value="protein"/>
</dbReference>
<dbReference type="Bgee" id="ENSG00000139155">
    <property type="expression patterns" value="Expressed in choroid plexus epithelium and 124 other cell types or tissues"/>
</dbReference>
<dbReference type="ExpressionAtlas" id="Q9NYB5">
    <property type="expression patterns" value="baseline and differential"/>
</dbReference>
<dbReference type="GO" id="GO:0016323">
    <property type="term" value="C:basolateral plasma membrane"/>
    <property type="evidence" value="ECO:0000314"/>
    <property type="project" value="ARUK-UCL"/>
</dbReference>
<dbReference type="GO" id="GO:0005886">
    <property type="term" value="C:plasma membrane"/>
    <property type="evidence" value="ECO:0000314"/>
    <property type="project" value="ARUK-UCL"/>
</dbReference>
<dbReference type="GO" id="GO:0015125">
    <property type="term" value="F:bile acid transmembrane transporter activity"/>
    <property type="evidence" value="ECO:0000318"/>
    <property type="project" value="GO_Central"/>
</dbReference>
<dbReference type="GO" id="GO:0008514">
    <property type="term" value="F:organic anion transmembrane transporter activity"/>
    <property type="evidence" value="ECO:0000314"/>
    <property type="project" value="UniProtKB"/>
</dbReference>
<dbReference type="GO" id="GO:0015347">
    <property type="term" value="F:sodium-independent organic anion transmembrane transporter activity"/>
    <property type="evidence" value="ECO:0000318"/>
    <property type="project" value="GO_Central"/>
</dbReference>
<dbReference type="GO" id="GO:0015349">
    <property type="term" value="F:thyroid hormone transmembrane transporter activity"/>
    <property type="evidence" value="ECO:0000314"/>
    <property type="project" value="ARUK-UCL"/>
</dbReference>
<dbReference type="GO" id="GO:0015721">
    <property type="term" value="P:bile acid and bile salt transport"/>
    <property type="evidence" value="ECO:0000318"/>
    <property type="project" value="GO_Central"/>
</dbReference>
<dbReference type="GO" id="GO:0006811">
    <property type="term" value="P:monoatomic ion transport"/>
    <property type="evidence" value="ECO:0007669"/>
    <property type="project" value="UniProtKB-KW"/>
</dbReference>
<dbReference type="GO" id="GO:2000611">
    <property type="term" value="P:positive regulation of thyroid hormone generation"/>
    <property type="evidence" value="ECO:0000315"/>
    <property type="project" value="ARUK-UCL"/>
</dbReference>
<dbReference type="GO" id="GO:0043252">
    <property type="term" value="P:sodium-independent organic anion transport"/>
    <property type="evidence" value="ECO:0000318"/>
    <property type="project" value="GO_Central"/>
</dbReference>
<dbReference type="GO" id="GO:0070327">
    <property type="term" value="P:thyroid hormone transport"/>
    <property type="evidence" value="ECO:0000314"/>
    <property type="project" value="ARUK-UCL"/>
</dbReference>
<dbReference type="GO" id="GO:0055085">
    <property type="term" value="P:transmembrane transport"/>
    <property type="evidence" value="ECO:0000314"/>
    <property type="project" value="ARUK-UCL"/>
</dbReference>
<dbReference type="GO" id="GO:0150104">
    <property type="term" value="P:transport across blood-brain barrier"/>
    <property type="evidence" value="ECO:0000303"/>
    <property type="project" value="ARUK-UCL"/>
</dbReference>
<dbReference type="CDD" id="cd17459">
    <property type="entry name" value="MFS_SLCO1C_OATP1C"/>
    <property type="match status" value="1"/>
</dbReference>
<dbReference type="FunFam" id="3.30.60.30:FF:000048">
    <property type="entry name" value="Solute carrier organic anion transporter family member"/>
    <property type="match status" value="1"/>
</dbReference>
<dbReference type="Gene3D" id="1.20.1250.20">
    <property type="entry name" value="MFS general substrate transporter like domains"/>
    <property type="match status" value="1"/>
</dbReference>
<dbReference type="InterPro" id="IPR002350">
    <property type="entry name" value="Kazal_dom"/>
</dbReference>
<dbReference type="InterPro" id="IPR036058">
    <property type="entry name" value="Kazal_dom_sf"/>
</dbReference>
<dbReference type="InterPro" id="IPR020846">
    <property type="entry name" value="MFS_dom"/>
</dbReference>
<dbReference type="InterPro" id="IPR036259">
    <property type="entry name" value="MFS_trans_sf"/>
</dbReference>
<dbReference type="InterPro" id="IPR004156">
    <property type="entry name" value="OATP"/>
</dbReference>
<dbReference type="NCBIfam" id="TIGR00805">
    <property type="entry name" value="oat"/>
    <property type="match status" value="1"/>
</dbReference>
<dbReference type="PANTHER" id="PTHR11388">
    <property type="entry name" value="ORGANIC ANION TRANSPORTER"/>
    <property type="match status" value="1"/>
</dbReference>
<dbReference type="PANTHER" id="PTHR11388:SF99">
    <property type="entry name" value="SOLUTE CARRIER ORGANIC ANION TRANSPORTER FAMILY MEMBER 1C1"/>
    <property type="match status" value="1"/>
</dbReference>
<dbReference type="Pfam" id="PF07648">
    <property type="entry name" value="Kazal_2"/>
    <property type="match status" value="1"/>
</dbReference>
<dbReference type="Pfam" id="PF03137">
    <property type="entry name" value="OATP"/>
    <property type="match status" value="1"/>
</dbReference>
<dbReference type="SUPFAM" id="SSF100895">
    <property type="entry name" value="Kazal-type serine protease inhibitors"/>
    <property type="match status" value="1"/>
</dbReference>
<dbReference type="SUPFAM" id="SSF103473">
    <property type="entry name" value="MFS general substrate transporter"/>
    <property type="match status" value="1"/>
</dbReference>
<dbReference type="PROSITE" id="PS51465">
    <property type="entry name" value="KAZAL_2"/>
    <property type="match status" value="1"/>
</dbReference>
<dbReference type="PROSITE" id="PS50850">
    <property type="entry name" value="MFS"/>
    <property type="match status" value="1"/>
</dbReference>
<organism>
    <name type="scientific">Homo sapiens</name>
    <name type="common">Human</name>
    <dbReference type="NCBI Taxonomy" id="9606"/>
    <lineage>
        <taxon>Eukaryota</taxon>
        <taxon>Metazoa</taxon>
        <taxon>Chordata</taxon>
        <taxon>Craniata</taxon>
        <taxon>Vertebrata</taxon>
        <taxon>Euteleostomi</taxon>
        <taxon>Mammalia</taxon>
        <taxon>Eutheria</taxon>
        <taxon>Euarchontoglires</taxon>
        <taxon>Primates</taxon>
        <taxon>Haplorrhini</taxon>
        <taxon>Catarrhini</taxon>
        <taxon>Hominidae</taxon>
        <taxon>Homo</taxon>
    </lineage>
</organism>
<name>SO1C1_HUMAN</name>
<keyword id="KW-0025">Alternative splicing</keyword>
<keyword id="KW-1003">Cell membrane</keyword>
<keyword id="KW-1015">Disulfide bond</keyword>
<keyword id="KW-0325">Glycoprotein</keyword>
<keyword id="KW-0406">Ion transport</keyword>
<keyword id="KW-0445">Lipid transport</keyword>
<keyword id="KW-0472">Membrane</keyword>
<keyword id="KW-1267">Proteomics identification</keyword>
<keyword id="KW-1185">Reference proteome</keyword>
<keyword id="KW-0812">Transmembrane</keyword>
<keyword id="KW-1133">Transmembrane helix</keyword>
<keyword id="KW-0813">Transport</keyword>
<sequence length="712" mass="78696">MDTSSKENIQLFCKTSVQPVGRPSFKTEYPSSEEKQPCCGELKVFLCALSFVYFAKALAEGYLKSTITQIERRFDIPSSLVGVIDGSFEIGNLLVITFVSYFGAKLHRPKIIGAGCVIMGVGTLLIAMPQFFMEQYKYERYSPSSNSTLSISPCLLESSSQLPVSVMEKSKSKISNECEVDTSSSMWIYVFLGNLLRGIGETPIQPLGIAYLDDFASEDNAAFYIGCVQTVAIIGPIFGFLLGSLCAKLYVDIGFVNLDHITITPKDPQWVGAWWLGYLIAGIISLLAAVPFWYLPKSLPRSQSREDSNSSSEKSKFIIDDHTDYQTPQGENAKIMEMARDFLPSLKNLFGNPVYFLYLCTSTVQFNSLFGMVTYKPKYIEQQYGQSSSRANFVIGLINIPAVALGIFSGGIVMKKFRISVCGAAKLYLGSSVFGYLLFLSLFALGCENSDVAGLTVSYQGTKPVSYHERALFSDCNSRCKCSETKWEPMCGENGITYVSACLAGCQTSNRSGKNIIFYNCTCVGIAASKSGNSSGIVGRCQKDNGCPQMFLYFLVISVITSYTLSLGGIPGYILLLRCIKPQLKSFALGIYTLAIRVLAGIPAPVYFGVLIDTSCLKWGFKRCGSRGSCRLYDSNVFRHIYLGLTVILGTVSILLSIAVLFILKKNYVSKHRSFITKRERTMVSTRFQKENYTTSDHLLQPNYWPGKETQL</sequence>
<accession>Q9NYB5</accession>
<accession>B7Z251</accession>
<accession>B7Z3Q3</accession>
<accession>B7Z8P1</accession>
<accession>F5GZD6</accession>
<accession>Q5JPA4</accession>
<proteinExistence type="evidence at protein level"/>